<proteinExistence type="inferred from homology"/>
<accession>A4IZT3</accession>
<dbReference type="EMBL" id="CP000608">
    <property type="protein sequence ID" value="ABO47432.1"/>
    <property type="molecule type" value="Genomic_DNA"/>
</dbReference>
<dbReference type="RefSeq" id="WP_003021600.1">
    <property type="nucleotide sequence ID" value="NC_009257.1"/>
</dbReference>
<dbReference type="SMR" id="A4IZT3"/>
<dbReference type="GeneID" id="75264260"/>
<dbReference type="KEGG" id="ftw:FTW_1756"/>
<dbReference type="HOGENOM" id="CLU_041575_5_2_6"/>
<dbReference type="GO" id="GO:1990904">
    <property type="term" value="C:ribonucleoprotein complex"/>
    <property type="evidence" value="ECO:0007669"/>
    <property type="project" value="UniProtKB-KW"/>
</dbReference>
<dbReference type="GO" id="GO:0005840">
    <property type="term" value="C:ribosome"/>
    <property type="evidence" value="ECO:0007669"/>
    <property type="project" value="UniProtKB-KW"/>
</dbReference>
<dbReference type="GO" id="GO:0019843">
    <property type="term" value="F:rRNA binding"/>
    <property type="evidence" value="ECO:0007669"/>
    <property type="project" value="UniProtKB-UniRule"/>
</dbReference>
<dbReference type="GO" id="GO:0003735">
    <property type="term" value="F:structural constituent of ribosome"/>
    <property type="evidence" value="ECO:0007669"/>
    <property type="project" value="InterPro"/>
</dbReference>
<dbReference type="GO" id="GO:0006412">
    <property type="term" value="P:translation"/>
    <property type="evidence" value="ECO:0007669"/>
    <property type="project" value="UniProtKB-UniRule"/>
</dbReference>
<dbReference type="Gene3D" id="3.40.1370.10">
    <property type="match status" value="1"/>
</dbReference>
<dbReference type="HAMAP" id="MF_01328_B">
    <property type="entry name" value="Ribosomal_uL4_B"/>
    <property type="match status" value="1"/>
</dbReference>
<dbReference type="InterPro" id="IPR002136">
    <property type="entry name" value="Ribosomal_uL4"/>
</dbReference>
<dbReference type="InterPro" id="IPR013005">
    <property type="entry name" value="Ribosomal_uL4-like"/>
</dbReference>
<dbReference type="InterPro" id="IPR023574">
    <property type="entry name" value="Ribosomal_uL4_dom_sf"/>
</dbReference>
<dbReference type="NCBIfam" id="TIGR03953">
    <property type="entry name" value="rplD_bact"/>
    <property type="match status" value="1"/>
</dbReference>
<dbReference type="PANTHER" id="PTHR10746">
    <property type="entry name" value="50S RIBOSOMAL PROTEIN L4"/>
    <property type="match status" value="1"/>
</dbReference>
<dbReference type="PANTHER" id="PTHR10746:SF6">
    <property type="entry name" value="LARGE RIBOSOMAL SUBUNIT PROTEIN UL4M"/>
    <property type="match status" value="1"/>
</dbReference>
<dbReference type="Pfam" id="PF00573">
    <property type="entry name" value="Ribosomal_L4"/>
    <property type="match status" value="1"/>
</dbReference>
<dbReference type="SUPFAM" id="SSF52166">
    <property type="entry name" value="Ribosomal protein L4"/>
    <property type="match status" value="1"/>
</dbReference>
<feature type="chain" id="PRO_1000052405" description="Large ribosomal subunit protein uL4">
    <location>
        <begin position="1"/>
        <end position="207"/>
    </location>
</feature>
<feature type="region of interest" description="Disordered" evidence="2">
    <location>
        <begin position="48"/>
        <end position="70"/>
    </location>
</feature>
<sequence length="207" mass="22553">MDLNIKSLAGQEAGSLGVAEGVFAADYNEALIHQVVVAYMAGARQGTKAQKTRSEVSGGGAKPWRQKGTGRARAGTIRSPIFRKGGVTFAAKPKSYKQKVNRKMYSGAVKSILSELLRSGRMTIVEELKLETPKTREFKSVIDSLGVKDVLFVVGVEEFSENLYLSSRNLKNVAVCDSVEINPVSLVCFENVVLTKKAIKEIEEKLV</sequence>
<organism>
    <name type="scientific">Francisella tularensis subsp. tularensis (strain WY96-3418)</name>
    <dbReference type="NCBI Taxonomy" id="418136"/>
    <lineage>
        <taxon>Bacteria</taxon>
        <taxon>Pseudomonadati</taxon>
        <taxon>Pseudomonadota</taxon>
        <taxon>Gammaproteobacteria</taxon>
        <taxon>Thiotrichales</taxon>
        <taxon>Francisellaceae</taxon>
        <taxon>Francisella</taxon>
    </lineage>
</organism>
<gene>
    <name evidence="1" type="primary">rplD</name>
    <name type="ordered locus">FTW_1756</name>
</gene>
<evidence type="ECO:0000255" key="1">
    <source>
        <dbReference type="HAMAP-Rule" id="MF_01328"/>
    </source>
</evidence>
<evidence type="ECO:0000256" key="2">
    <source>
        <dbReference type="SAM" id="MobiDB-lite"/>
    </source>
</evidence>
<evidence type="ECO:0000305" key="3"/>
<comment type="function">
    <text evidence="1">One of the primary rRNA binding proteins, this protein initially binds near the 5'-end of the 23S rRNA. It is important during the early stages of 50S assembly. It makes multiple contacts with different domains of the 23S rRNA in the assembled 50S subunit and ribosome.</text>
</comment>
<comment type="function">
    <text evidence="1">Forms part of the polypeptide exit tunnel.</text>
</comment>
<comment type="subunit">
    <text evidence="1">Part of the 50S ribosomal subunit.</text>
</comment>
<comment type="similarity">
    <text evidence="1">Belongs to the universal ribosomal protein uL4 family.</text>
</comment>
<name>RL4_FRATW</name>
<keyword id="KW-0687">Ribonucleoprotein</keyword>
<keyword id="KW-0689">Ribosomal protein</keyword>
<keyword id="KW-0694">RNA-binding</keyword>
<keyword id="KW-0699">rRNA-binding</keyword>
<protein>
    <recommendedName>
        <fullName evidence="1">Large ribosomal subunit protein uL4</fullName>
    </recommendedName>
    <alternativeName>
        <fullName evidence="3">50S ribosomal protein L4</fullName>
    </alternativeName>
</protein>
<reference key="1">
    <citation type="journal article" date="2007" name="PLoS ONE">
        <title>Complete genomic characterization of a pathogenic A.II strain of Francisella tularensis subspecies tularensis.</title>
        <authorList>
            <person name="Beckstrom-Sternberg S.M."/>
            <person name="Auerbach R.K."/>
            <person name="Godbole S."/>
            <person name="Pearson J.V."/>
            <person name="Beckstrom-Sternberg J.S."/>
            <person name="Deng Z."/>
            <person name="Munk C."/>
            <person name="Kubota K."/>
            <person name="Zhou Y."/>
            <person name="Bruce D."/>
            <person name="Noronha J."/>
            <person name="Scheuermann R.H."/>
            <person name="Wang A."/>
            <person name="Wei X."/>
            <person name="Wang J."/>
            <person name="Hao J."/>
            <person name="Wagner D.M."/>
            <person name="Brettin T.S."/>
            <person name="Brown N."/>
            <person name="Gilna P."/>
            <person name="Keim P.S."/>
        </authorList>
    </citation>
    <scope>NUCLEOTIDE SEQUENCE [LARGE SCALE GENOMIC DNA]</scope>
    <source>
        <strain>WY96-3418</strain>
    </source>
</reference>